<reference key="1">
    <citation type="journal article" date="1983" name="J. Biol. Chem.">
        <title>Repeated DNA sequences upstream from HIS1 also occur at several other co-regulated genes in Saccharomyces cerevisiae.</title>
        <authorList>
            <person name="Hinnebusch A.G."/>
            <person name="Fink G.R."/>
        </authorList>
    </citation>
    <scope>NUCLEOTIDE SEQUENCE [GENOMIC DNA]</scope>
</reference>
<reference key="2">
    <citation type="journal article" date="1997" name="Nature">
        <title>The nucleotide sequence of Saccharomyces cerevisiae chromosome V.</title>
        <authorList>
            <person name="Dietrich F.S."/>
            <person name="Mulligan J.T."/>
            <person name="Hennessy K.M."/>
            <person name="Yelton M.A."/>
            <person name="Allen E."/>
            <person name="Araujo R."/>
            <person name="Aviles E."/>
            <person name="Berno A."/>
            <person name="Brennan T."/>
            <person name="Carpenter J."/>
            <person name="Chen E."/>
            <person name="Cherry J.M."/>
            <person name="Chung E."/>
            <person name="Duncan M."/>
            <person name="Guzman E."/>
            <person name="Hartzell G."/>
            <person name="Hunicke-Smith S."/>
            <person name="Hyman R.W."/>
            <person name="Kayser A."/>
            <person name="Komp C."/>
            <person name="Lashkari D."/>
            <person name="Lew H."/>
            <person name="Lin D."/>
            <person name="Mosedale D."/>
            <person name="Nakahara K."/>
            <person name="Namath A."/>
            <person name="Norgren R."/>
            <person name="Oefner P."/>
            <person name="Oh C."/>
            <person name="Petel F.X."/>
            <person name="Roberts D."/>
            <person name="Sehl P."/>
            <person name="Schramm S."/>
            <person name="Shogren T."/>
            <person name="Smith V."/>
            <person name="Taylor P."/>
            <person name="Wei Y."/>
            <person name="Botstein D."/>
            <person name="Davis R.W."/>
        </authorList>
    </citation>
    <scope>NUCLEOTIDE SEQUENCE [LARGE SCALE GENOMIC DNA]</scope>
    <source>
        <strain>ATCC 204508 / S288c</strain>
    </source>
</reference>
<reference key="3">
    <citation type="journal article" date="2014" name="G3 (Bethesda)">
        <title>The reference genome sequence of Saccharomyces cerevisiae: Then and now.</title>
        <authorList>
            <person name="Engel S.R."/>
            <person name="Dietrich F.S."/>
            <person name="Fisk D.G."/>
            <person name="Binkley G."/>
            <person name="Balakrishnan R."/>
            <person name="Costanzo M.C."/>
            <person name="Dwight S.S."/>
            <person name="Hitz B.C."/>
            <person name="Karra K."/>
            <person name="Nash R.S."/>
            <person name="Weng S."/>
            <person name="Wong E.D."/>
            <person name="Lloyd P."/>
            <person name="Skrzypek M.S."/>
            <person name="Miyasato S.R."/>
            <person name="Simison M."/>
            <person name="Cherry J.M."/>
        </authorList>
    </citation>
    <scope>GENOME REANNOTATION</scope>
    <source>
        <strain>ATCC 204508 / S288c</strain>
    </source>
</reference>
<reference key="4">
    <citation type="journal article" date="2012" name="Proc. Natl. Acad. Sci. U.S.A.">
        <title>N-terminal acetylome analyses and functional insights of the N-terminal acetyltransferase NatB.</title>
        <authorList>
            <person name="Van Damme P."/>
            <person name="Lasa M."/>
            <person name="Polevoda B."/>
            <person name="Gazquez C."/>
            <person name="Elosegui-Artola A."/>
            <person name="Kim D.S."/>
            <person name="De Juan-Pardo E."/>
            <person name="Demeyer K."/>
            <person name="Hole K."/>
            <person name="Larrea E."/>
            <person name="Timmerman E."/>
            <person name="Prieto J."/>
            <person name="Arnesen T."/>
            <person name="Sherman F."/>
            <person name="Gevaert K."/>
            <person name="Aldabe R."/>
        </authorList>
    </citation>
    <scope>ACETYLATION [LARGE SCALE ANALYSIS] AT MET-1</scope>
    <scope>IDENTIFICATION BY MASS SPECTROMETRY [LARGE SCALE ANALYSIS]</scope>
</reference>
<accession>P00498</accession>
<accession>D3DLV8</accession>
<gene>
    <name type="primary">HIS1</name>
    <name type="ordered locus">YER055C</name>
</gene>
<comment type="function">
    <text evidence="1">Catalyzes the condensation of ATP and 5-phosphoribose 1-diphosphate to form N'-(5'-phosphoribosyl)-ATP (PR-ATP). Has a crucial role in the pathway because the rate of histidine biosynthesis seems to be controlled primarily by regulation of the enzymatic activity (By similarity).</text>
</comment>
<comment type="catalytic activity">
    <reaction>
        <text>1-(5-phospho-beta-D-ribosyl)-ATP + diphosphate = 5-phospho-alpha-D-ribose 1-diphosphate + ATP</text>
        <dbReference type="Rhea" id="RHEA:18473"/>
        <dbReference type="ChEBI" id="CHEBI:30616"/>
        <dbReference type="ChEBI" id="CHEBI:33019"/>
        <dbReference type="ChEBI" id="CHEBI:58017"/>
        <dbReference type="ChEBI" id="CHEBI:73183"/>
        <dbReference type="EC" id="2.4.2.17"/>
    </reaction>
</comment>
<comment type="pathway">
    <text>Amino-acid biosynthesis; L-histidine biosynthesis; L-histidine from 5-phospho-alpha-D-ribose 1-diphosphate: step 1/9.</text>
</comment>
<comment type="subcellular location">
    <subcellularLocation>
        <location evidence="1">Cytoplasm</location>
    </subcellularLocation>
</comment>
<comment type="similarity">
    <text evidence="2">Belongs to the ATP phosphoribosyltransferase family.</text>
</comment>
<sequence>MDLVNHLTDRLLFAIPKKGRLYSKSVSILNGADITFHRSQRLDIALSTSLPVALVFLPAADIPTFVGEGKCDLGITGVDQVRESNVDVDLAIDLQFGNCKLQVQVPVNGEYKKPEQLIGKTIVTSFVKLAEKYFADLEGTTVEKMTTRIKFVSGSVEASCALGIGDAIVDLVESGETMRAAGLVDIATVLSTSAYLIESKNPKSDKSLIATIKSRIEGVMTAQRFVSCIYNAPEDKLPELLKVTPGRRAPTISKIDDEGWVAVSSMIERKTKGVVLDELKRLGASDIMVFEISNCRV</sequence>
<organism>
    <name type="scientific">Saccharomyces cerevisiae (strain ATCC 204508 / S288c)</name>
    <name type="common">Baker's yeast</name>
    <dbReference type="NCBI Taxonomy" id="559292"/>
    <lineage>
        <taxon>Eukaryota</taxon>
        <taxon>Fungi</taxon>
        <taxon>Dikarya</taxon>
        <taxon>Ascomycota</taxon>
        <taxon>Saccharomycotina</taxon>
        <taxon>Saccharomycetes</taxon>
        <taxon>Saccharomycetales</taxon>
        <taxon>Saccharomycetaceae</taxon>
        <taxon>Saccharomyces</taxon>
    </lineage>
</organism>
<evidence type="ECO:0000250" key="1"/>
<evidence type="ECO:0000305" key="2"/>
<evidence type="ECO:0007744" key="3">
    <source>
    </source>
</evidence>
<keyword id="KW-0007">Acetylation</keyword>
<keyword id="KW-0028">Amino-acid biosynthesis</keyword>
<keyword id="KW-0067">ATP-binding</keyword>
<keyword id="KW-0963">Cytoplasm</keyword>
<keyword id="KW-0328">Glycosyltransferase</keyword>
<keyword id="KW-0368">Histidine biosynthesis</keyword>
<keyword id="KW-0547">Nucleotide-binding</keyword>
<keyword id="KW-1185">Reference proteome</keyword>
<keyword id="KW-0808">Transferase</keyword>
<name>HIS1_YEAST</name>
<proteinExistence type="evidence at protein level"/>
<feature type="chain" id="PRO_0000151958" description="ATP phosphoribosyltransferase">
    <location>
        <begin position="1"/>
        <end position="297"/>
    </location>
</feature>
<feature type="modified residue" description="N-acetylmethionine" evidence="3">
    <location>
        <position position="1"/>
    </location>
</feature>
<protein>
    <recommendedName>
        <fullName>ATP phosphoribosyltransferase</fullName>
        <shortName>ATP-PRT</shortName>
        <shortName>ATP-PRTase</shortName>
        <ecNumber>2.4.2.17</ecNumber>
    </recommendedName>
</protein>
<dbReference type="EC" id="2.4.2.17"/>
<dbReference type="EMBL" id="V01306">
    <property type="protein sequence ID" value="CAA24613.1"/>
    <property type="molecule type" value="Genomic_DNA"/>
</dbReference>
<dbReference type="EMBL" id="U18813">
    <property type="protein sequence ID" value="AAB64591.1"/>
    <property type="molecule type" value="Genomic_DNA"/>
</dbReference>
<dbReference type="EMBL" id="BK006939">
    <property type="protein sequence ID" value="DAA07712.1"/>
    <property type="molecule type" value="Genomic_DNA"/>
</dbReference>
<dbReference type="PIR" id="A00583">
    <property type="entry name" value="XRBY"/>
</dbReference>
<dbReference type="RefSeq" id="NP_010975.3">
    <property type="nucleotide sequence ID" value="NM_001178946.3"/>
</dbReference>
<dbReference type="SMR" id="P00498"/>
<dbReference type="BioGRID" id="36795">
    <property type="interactions" value="45"/>
</dbReference>
<dbReference type="FunCoup" id="P00498">
    <property type="interactions" value="286"/>
</dbReference>
<dbReference type="IntAct" id="P00498">
    <property type="interactions" value="16"/>
</dbReference>
<dbReference type="MINT" id="P00498"/>
<dbReference type="STRING" id="4932.YER055C"/>
<dbReference type="iPTMnet" id="P00498"/>
<dbReference type="PaxDb" id="4932-YER055C"/>
<dbReference type="PeptideAtlas" id="P00498"/>
<dbReference type="EnsemblFungi" id="YER055C_mRNA">
    <property type="protein sequence ID" value="YER055C"/>
    <property type="gene ID" value="YER055C"/>
</dbReference>
<dbReference type="GeneID" id="856782"/>
<dbReference type="KEGG" id="sce:YER055C"/>
<dbReference type="AGR" id="SGD:S000000857"/>
<dbReference type="SGD" id="S000000857">
    <property type="gene designation" value="HIS1"/>
</dbReference>
<dbReference type="VEuPathDB" id="FungiDB:YER055C"/>
<dbReference type="eggNOG" id="KOG2831">
    <property type="taxonomic scope" value="Eukaryota"/>
</dbReference>
<dbReference type="HOGENOM" id="CLU_038115_1_2_1"/>
<dbReference type="InParanoid" id="P00498"/>
<dbReference type="OMA" id="YVMMDYD"/>
<dbReference type="OrthoDB" id="2574at2759"/>
<dbReference type="BioCyc" id="YEAST:YER055C-MONOMER"/>
<dbReference type="UniPathway" id="UPA00031">
    <property type="reaction ID" value="UER00006"/>
</dbReference>
<dbReference type="BioGRID-ORCS" id="856782">
    <property type="hits" value="6 hits in 10 CRISPR screens"/>
</dbReference>
<dbReference type="PRO" id="PR:P00498"/>
<dbReference type="Proteomes" id="UP000002311">
    <property type="component" value="Chromosome V"/>
</dbReference>
<dbReference type="RNAct" id="P00498">
    <property type="molecule type" value="protein"/>
</dbReference>
<dbReference type="GO" id="GO:0005737">
    <property type="term" value="C:cytoplasm"/>
    <property type="evidence" value="ECO:0007669"/>
    <property type="project" value="UniProtKB-SubCell"/>
</dbReference>
<dbReference type="GO" id="GO:0005524">
    <property type="term" value="F:ATP binding"/>
    <property type="evidence" value="ECO:0007669"/>
    <property type="project" value="UniProtKB-KW"/>
</dbReference>
<dbReference type="GO" id="GO:0003879">
    <property type="term" value="F:ATP phosphoribosyltransferase activity"/>
    <property type="evidence" value="ECO:0000315"/>
    <property type="project" value="SGD"/>
</dbReference>
<dbReference type="GO" id="GO:0000287">
    <property type="term" value="F:magnesium ion binding"/>
    <property type="evidence" value="ECO:0007669"/>
    <property type="project" value="InterPro"/>
</dbReference>
<dbReference type="GO" id="GO:0000105">
    <property type="term" value="P:L-histidine biosynthetic process"/>
    <property type="evidence" value="ECO:0000315"/>
    <property type="project" value="SGD"/>
</dbReference>
<dbReference type="CDD" id="cd13592">
    <property type="entry name" value="PBP2_HisGL2"/>
    <property type="match status" value="1"/>
</dbReference>
<dbReference type="FunFam" id="3.30.70.120:FF:000003">
    <property type="entry name" value="ATP phosphoribosyltransferase"/>
    <property type="match status" value="1"/>
</dbReference>
<dbReference type="FunFam" id="3.40.190.10:FF:000123">
    <property type="entry name" value="HIS1p ATP phosphoribosyltransferase"/>
    <property type="match status" value="1"/>
</dbReference>
<dbReference type="Gene3D" id="3.30.70.120">
    <property type="match status" value="1"/>
</dbReference>
<dbReference type="Gene3D" id="3.40.190.10">
    <property type="entry name" value="Periplasmic binding protein-like II"/>
    <property type="match status" value="2"/>
</dbReference>
<dbReference type="HAMAP" id="MF_00079">
    <property type="entry name" value="HisG_Long"/>
    <property type="match status" value="1"/>
</dbReference>
<dbReference type="InterPro" id="IPR020621">
    <property type="entry name" value="ATP-PRT_HisG_long"/>
</dbReference>
<dbReference type="InterPro" id="IPR013820">
    <property type="entry name" value="ATP_PRibTrfase_cat"/>
</dbReference>
<dbReference type="InterPro" id="IPR018198">
    <property type="entry name" value="ATP_PRibTrfase_CS"/>
</dbReference>
<dbReference type="InterPro" id="IPR001348">
    <property type="entry name" value="ATP_PRibTrfase_HisG"/>
</dbReference>
<dbReference type="InterPro" id="IPR013115">
    <property type="entry name" value="HisG_C"/>
</dbReference>
<dbReference type="InterPro" id="IPR011322">
    <property type="entry name" value="N-reg_PII-like_a/b"/>
</dbReference>
<dbReference type="InterPro" id="IPR015867">
    <property type="entry name" value="N-reg_PII/ATP_PRibTrfase_C"/>
</dbReference>
<dbReference type="NCBIfam" id="TIGR00070">
    <property type="entry name" value="hisG"/>
    <property type="match status" value="1"/>
</dbReference>
<dbReference type="NCBIfam" id="TIGR03455">
    <property type="entry name" value="HisG_C-term"/>
    <property type="match status" value="1"/>
</dbReference>
<dbReference type="PANTHER" id="PTHR21403:SF8">
    <property type="entry name" value="ATP PHOSPHORIBOSYLTRANSFERASE"/>
    <property type="match status" value="1"/>
</dbReference>
<dbReference type="PANTHER" id="PTHR21403">
    <property type="entry name" value="ATP PHOSPHORIBOSYLTRANSFERASE ATP-PRTASE"/>
    <property type="match status" value="1"/>
</dbReference>
<dbReference type="Pfam" id="PF01634">
    <property type="entry name" value="HisG"/>
    <property type="match status" value="1"/>
</dbReference>
<dbReference type="Pfam" id="PF08029">
    <property type="entry name" value="HisG_C"/>
    <property type="match status" value="1"/>
</dbReference>
<dbReference type="SUPFAM" id="SSF54913">
    <property type="entry name" value="GlnB-like"/>
    <property type="match status" value="1"/>
</dbReference>
<dbReference type="SUPFAM" id="SSF53850">
    <property type="entry name" value="Periplasmic binding protein-like II"/>
    <property type="match status" value="1"/>
</dbReference>
<dbReference type="PROSITE" id="PS01316">
    <property type="entry name" value="ATP_P_PHORIBOSYLTR"/>
    <property type="match status" value="1"/>
</dbReference>